<proteinExistence type="inferred from homology"/>
<comment type="similarity">
    <text evidence="1">Belongs to the universal ribosomal protein uS9 family.</text>
</comment>
<feature type="chain" id="PRO_1000051198" description="Small ribosomal subunit protein uS9">
    <location>
        <begin position="1"/>
        <end position="130"/>
    </location>
</feature>
<protein>
    <recommendedName>
        <fullName evidence="1">Small ribosomal subunit protein uS9</fullName>
    </recommendedName>
    <alternativeName>
        <fullName evidence="2">30S ribosomal protein S9</fullName>
    </alternativeName>
</protein>
<dbReference type="EMBL" id="CP000141">
    <property type="protein sequence ID" value="ABB16130.1"/>
    <property type="molecule type" value="Genomic_DNA"/>
</dbReference>
<dbReference type="RefSeq" id="WP_011345155.1">
    <property type="nucleotide sequence ID" value="NC_007503.1"/>
</dbReference>
<dbReference type="SMR" id="Q3A9V2"/>
<dbReference type="FunCoup" id="Q3A9V2">
    <property type="interactions" value="499"/>
</dbReference>
<dbReference type="STRING" id="246194.CHY_2273"/>
<dbReference type="KEGG" id="chy:CHY_2273"/>
<dbReference type="eggNOG" id="COG0103">
    <property type="taxonomic scope" value="Bacteria"/>
</dbReference>
<dbReference type="HOGENOM" id="CLU_046483_2_1_9"/>
<dbReference type="InParanoid" id="Q3A9V2"/>
<dbReference type="OrthoDB" id="9803965at2"/>
<dbReference type="Proteomes" id="UP000002706">
    <property type="component" value="Chromosome"/>
</dbReference>
<dbReference type="GO" id="GO:0022627">
    <property type="term" value="C:cytosolic small ribosomal subunit"/>
    <property type="evidence" value="ECO:0007669"/>
    <property type="project" value="TreeGrafter"/>
</dbReference>
<dbReference type="GO" id="GO:0003723">
    <property type="term" value="F:RNA binding"/>
    <property type="evidence" value="ECO:0007669"/>
    <property type="project" value="TreeGrafter"/>
</dbReference>
<dbReference type="GO" id="GO:0003735">
    <property type="term" value="F:structural constituent of ribosome"/>
    <property type="evidence" value="ECO:0007669"/>
    <property type="project" value="InterPro"/>
</dbReference>
<dbReference type="GO" id="GO:0006412">
    <property type="term" value="P:translation"/>
    <property type="evidence" value="ECO:0007669"/>
    <property type="project" value="UniProtKB-UniRule"/>
</dbReference>
<dbReference type="FunFam" id="3.30.230.10:FF:000001">
    <property type="entry name" value="30S ribosomal protein S9"/>
    <property type="match status" value="1"/>
</dbReference>
<dbReference type="Gene3D" id="3.30.230.10">
    <property type="match status" value="1"/>
</dbReference>
<dbReference type="HAMAP" id="MF_00532_B">
    <property type="entry name" value="Ribosomal_uS9_B"/>
    <property type="match status" value="1"/>
</dbReference>
<dbReference type="InterPro" id="IPR020568">
    <property type="entry name" value="Ribosomal_Su5_D2-typ_SF"/>
</dbReference>
<dbReference type="InterPro" id="IPR000754">
    <property type="entry name" value="Ribosomal_uS9"/>
</dbReference>
<dbReference type="InterPro" id="IPR023035">
    <property type="entry name" value="Ribosomal_uS9_bac/plastid"/>
</dbReference>
<dbReference type="InterPro" id="IPR020574">
    <property type="entry name" value="Ribosomal_uS9_CS"/>
</dbReference>
<dbReference type="InterPro" id="IPR014721">
    <property type="entry name" value="Ribsml_uS5_D2-typ_fold_subgr"/>
</dbReference>
<dbReference type="NCBIfam" id="NF001099">
    <property type="entry name" value="PRK00132.1"/>
    <property type="match status" value="1"/>
</dbReference>
<dbReference type="PANTHER" id="PTHR21569">
    <property type="entry name" value="RIBOSOMAL PROTEIN S9"/>
    <property type="match status" value="1"/>
</dbReference>
<dbReference type="PANTHER" id="PTHR21569:SF1">
    <property type="entry name" value="SMALL RIBOSOMAL SUBUNIT PROTEIN US9M"/>
    <property type="match status" value="1"/>
</dbReference>
<dbReference type="Pfam" id="PF00380">
    <property type="entry name" value="Ribosomal_S9"/>
    <property type="match status" value="1"/>
</dbReference>
<dbReference type="SUPFAM" id="SSF54211">
    <property type="entry name" value="Ribosomal protein S5 domain 2-like"/>
    <property type="match status" value="1"/>
</dbReference>
<dbReference type="PROSITE" id="PS00360">
    <property type="entry name" value="RIBOSOMAL_S9"/>
    <property type="match status" value="1"/>
</dbReference>
<sequence>MAVVNFYGTGRRKEAVARVFVVPGEGNITINGKSLEEYFPRKTLQIIVKQPLELTNTVGKFDVKAKVHGGGISGQAGAVRLGIARALVQADPSLRPVLKKAGFLTRDPRMVERKKYGLRKSRRRPQWTKR</sequence>
<evidence type="ECO:0000255" key="1">
    <source>
        <dbReference type="HAMAP-Rule" id="MF_00532"/>
    </source>
</evidence>
<evidence type="ECO:0000305" key="2"/>
<reference key="1">
    <citation type="journal article" date="2005" name="PLoS Genet.">
        <title>Life in hot carbon monoxide: the complete genome sequence of Carboxydothermus hydrogenoformans Z-2901.</title>
        <authorList>
            <person name="Wu M."/>
            <person name="Ren Q."/>
            <person name="Durkin A.S."/>
            <person name="Daugherty S.C."/>
            <person name="Brinkac L.M."/>
            <person name="Dodson R.J."/>
            <person name="Madupu R."/>
            <person name="Sullivan S.A."/>
            <person name="Kolonay J.F."/>
            <person name="Nelson W.C."/>
            <person name="Tallon L.J."/>
            <person name="Jones K.M."/>
            <person name="Ulrich L.E."/>
            <person name="Gonzalez J.M."/>
            <person name="Zhulin I.B."/>
            <person name="Robb F.T."/>
            <person name="Eisen J.A."/>
        </authorList>
    </citation>
    <scope>NUCLEOTIDE SEQUENCE [LARGE SCALE GENOMIC DNA]</scope>
    <source>
        <strain>ATCC BAA-161 / DSM 6008 / Z-2901</strain>
    </source>
</reference>
<gene>
    <name evidence="1" type="primary">rpsI</name>
    <name type="ordered locus">CHY_2273</name>
</gene>
<keyword id="KW-1185">Reference proteome</keyword>
<keyword id="KW-0687">Ribonucleoprotein</keyword>
<keyword id="KW-0689">Ribosomal protein</keyword>
<accession>Q3A9V2</accession>
<organism>
    <name type="scientific">Carboxydothermus hydrogenoformans (strain ATCC BAA-161 / DSM 6008 / Z-2901)</name>
    <dbReference type="NCBI Taxonomy" id="246194"/>
    <lineage>
        <taxon>Bacteria</taxon>
        <taxon>Bacillati</taxon>
        <taxon>Bacillota</taxon>
        <taxon>Clostridia</taxon>
        <taxon>Thermoanaerobacterales</taxon>
        <taxon>Thermoanaerobacteraceae</taxon>
        <taxon>Carboxydothermus</taxon>
    </lineage>
</organism>
<name>RS9_CARHZ</name>